<protein>
    <recommendedName>
        <fullName evidence="1">tRNA (guanine-N(1)-)-methyltransferase</fullName>
        <ecNumber evidence="1">2.1.1.228</ecNumber>
    </recommendedName>
    <alternativeName>
        <fullName evidence="1">M1G-methyltransferase</fullName>
    </alternativeName>
    <alternativeName>
        <fullName evidence="1">tRNA [GM37] methyltransferase</fullName>
    </alternativeName>
</protein>
<reference key="1">
    <citation type="journal article" date="2010" name="Genome Biol.">
        <title>Structure and dynamics of the pan-genome of Streptococcus pneumoniae and closely related species.</title>
        <authorList>
            <person name="Donati C."/>
            <person name="Hiller N.L."/>
            <person name="Tettelin H."/>
            <person name="Muzzi A."/>
            <person name="Croucher N.J."/>
            <person name="Angiuoli S.V."/>
            <person name="Oggioni M."/>
            <person name="Dunning Hotopp J.C."/>
            <person name="Hu F.Z."/>
            <person name="Riley D.R."/>
            <person name="Covacci A."/>
            <person name="Mitchell T.J."/>
            <person name="Bentley S.D."/>
            <person name="Kilian M."/>
            <person name="Ehrlich G.D."/>
            <person name="Rappuoli R."/>
            <person name="Moxon E.R."/>
            <person name="Masignani V."/>
        </authorList>
    </citation>
    <scope>NUCLEOTIDE SEQUENCE [LARGE SCALE GENOMIC DNA]</scope>
    <source>
        <strain>Taiwan19F-14</strain>
    </source>
</reference>
<comment type="function">
    <text evidence="1">Specifically methylates guanosine-37 in various tRNAs.</text>
</comment>
<comment type="catalytic activity">
    <reaction evidence="1">
        <text>guanosine(37) in tRNA + S-adenosyl-L-methionine = N(1)-methylguanosine(37) in tRNA + S-adenosyl-L-homocysteine + H(+)</text>
        <dbReference type="Rhea" id="RHEA:36899"/>
        <dbReference type="Rhea" id="RHEA-COMP:10145"/>
        <dbReference type="Rhea" id="RHEA-COMP:10147"/>
        <dbReference type="ChEBI" id="CHEBI:15378"/>
        <dbReference type="ChEBI" id="CHEBI:57856"/>
        <dbReference type="ChEBI" id="CHEBI:59789"/>
        <dbReference type="ChEBI" id="CHEBI:73542"/>
        <dbReference type="ChEBI" id="CHEBI:74269"/>
        <dbReference type="EC" id="2.1.1.228"/>
    </reaction>
</comment>
<comment type="subunit">
    <text evidence="1">Homodimer.</text>
</comment>
<comment type="subcellular location">
    <subcellularLocation>
        <location evidence="1">Cytoplasm</location>
    </subcellularLocation>
</comment>
<comment type="similarity">
    <text evidence="1">Belongs to the RNA methyltransferase TrmD family.</text>
</comment>
<accession>C1CSA6</accession>
<proteinExistence type="inferred from homology"/>
<keyword id="KW-0963">Cytoplasm</keyword>
<keyword id="KW-0489">Methyltransferase</keyword>
<keyword id="KW-0949">S-adenosyl-L-methionine</keyword>
<keyword id="KW-0808">Transferase</keyword>
<keyword id="KW-0819">tRNA processing</keyword>
<organism>
    <name type="scientific">Streptococcus pneumoniae (strain Taiwan19F-14)</name>
    <dbReference type="NCBI Taxonomy" id="487213"/>
    <lineage>
        <taxon>Bacteria</taxon>
        <taxon>Bacillati</taxon>
        <taxon>Bacillota</taxon>
        <taxon>Bacilli</taxon>
        <taxon>Lactobacillales</taxon>
        <taxon>Streptococcaceae</taxon>
        <taxon>Streptococcus</taxon>
    </lineage>
</organism>
<feature type="chain" id="PRO_1000198590" description="tRNA (guanine-N(1)-)-methyltransferase">
    <location>
        <begin position="1"/>
        <end position="239"/>
    </location>
</feature>
<feature type="binding site" evidence="1">
    <location>
        <position position="108"/>
    </location>
    <ligand>
        <name>S-adenosyl-L-methionine</name>
        <dbReference type="ChEBI" id="CHEBI:59789"/>
    </ligand>
</feature>
<feature type="binding site" evidence="1">
    <location>
        <begin position="127"/>
        <end position="132"/>
    </location>
    <ligand>
        <name>S-adenosyl-L-methionine</name>
        <dbReference type="ChEBI" id="CHEBI:59789"/>
    </ligand>
</feature>
<gene>
    <name evidence="1" type="primary">trmD</name>
    <name type="ordered locus">SPT_1422</name>
</gene>
<sequence length="239" mass="27633">MKIDILTLFPEMFSPLEHSIVGKAREKGLLDIQYHNFRENAEKARHVDDEPYGGGQGMLLRAQPIFDSFDAIEKKNPRVILLDPAGKQFDQAYAEDLAQEEELIFICGHYEGYDERIKTLVTDEISLGDYVLTGGELAAMTMIDATVRLIPEVIGKESSHQDDSFSSGLLEYPQYTRPYDYRGMVVPDVLMSGHHEKIRQWRLYESLKKTYERRPDLLEHYQLTVEEEKMLAEIKENKE</sequence>
<name>TRMD_STRZT</name>
<evidence type="ECO:0000255" key="1">
    <source>
        <dbReference type="HAMAP-Rule" id="MF_00605"/>
    </source>
</evidence>
<dbReference type="EC" id="2.1.1.228" evidence="1"/>
<dbReference type="EMBL" id="CP000921">
    <property type="protein sequence ID" value="ACO23528.1"/>
    <property type="molecule type" value="Genomic_DNA"/>
</dbReference>
<dbReference type="RefSeq" id="WP_000686921.1">
    <property type="nucleotide sequence ID" value="NC_012469.1"/>
</dbReference>
<dbReference type="SMR" id="C1CSA6"/>
<dbReference type="KEGG" id="snt:SPT_1422"/>
<dbReference type="HOGENOM" id="CLU_047363_0_1_9"/>
<dbReference type="GO" id="GO:0005829">
    <property type="term" value="C:cytosol"/>
    <property type="evidence" value="ECO:0007669"/>
    <property type="project" value="TreeGrafter"/>
</dbReference>
<dbReference type="GO" id="GO:0052906">
    <property type="term" value="F:tRNA (guanine(37)-N1)-methyltransferase activity"/>
    <property type="evidence" value="ECO:0007669"/>
    <property type="project" value="UniProtKB-UniRule"/>
</dbReference>
<dbReference type="GO" id="GO:0002939">
    <property type="term" value="P:tRNA N1-guanine methylation"/>
    <property type="evidence" value="ECO:0007669"/>
    <property type="project" value="TreeGrafter"/>
</dbReference>
<dbReference type="CDD" id="cd18080">
    <property type="entry name" value="TrmD-like"/>
    <property type="match status" value="1"/>
</dbReference>
<dbReference type="FunFam" id="1.10.1270.20:FF:000001">
    <property type="entry name" value="tRNA (guanine-N(1)-)-methyltransferase"/>
    <property type="match status" value="1"/>
</dbReference>
<dbReference type="FunFam" id="3.40.1280.10:FF:000001">
    <property type="entry name" value="tRNA (guanine-N(1)-)-methyltransferase"/>
    <property type="match status" value="1"/>
</dbReference>
<dbReference type="Gene3D" id="3.40.1280.10">
    <property type="match status" value="1"/>
</dbReference>
<dbReference type="Gene3D" id="1.10.1270.20">
    <property type="entry name" value="tRNA(m1g37)methyltransferase, domain 2"/>
    <property type="match status" value="1"/>
</dbReference>
<dbReference type="HAMAP" id="MF_00605">
    <property type="entry name" value="TrmD"/>
    <property type="match status" value="1"/>
</dbReference>
<dbReference type="InterPro" id="IPR029028">
    <property type="entry name" value="Alpha/beta_knot_MTases"/>
</dbReference>
<dbReference type="InterPro" id="IPR023148">
    <property type="entry name" value="tRNA_m1G_MeTrfase_C_sf"/>
</dbReference>
<dbReference type="InterPro" id="IPR002649">
    <property type="entry name" value="tRNA_m1G_MeTrfase_TrmD"/>
</dbReference>
<dbReference type="InterPro" id="IPR029026">
    <property type="entry name" value="tRNA_m1G_MTases_N"/>
</dbReference>
<dbReference type="InterPro" id="IPR016009">
    <property type="entry name" value="tRNA_MeTrfase_TRMD/TRM10"/>
</dbReference>
<dbReference type="NCBIfam" id="NF000648">
    <property type="entry name" value="PRK00026.1"/>
    <property type="match status" value="1"/>
</dbReference>
<dbReference type="NCBIfam" id="TIGR00088">
    <property type="entry name" value="trmD"/>
    <property type="match status" value="1"/>
</dbReference>
<dbReference type="PANTHER" id="PTHR46417">
    <property type="entry name" value="TRNA (GUANINE-N(1)-)-METHYLTRANSFERASE"/>
    <property type="match status" value="1"/>
</dbReference>
<dbReference type="PANTHER" id="PTHR46417:SF1">
    <property type="entry name" value="TRNA (GUANINE-N(1)-)-METHYLTRANSFERASE"/>
    <property type="match status" value="1"/>
</dbReference>
<dbReference type="Pfam" id="PF01746">
    <property type="entry name" value="tRNA_m1G_MT"/>
    <property type="match status" value="1"/>
</dbReference>
<dbReference type="PIRSF" id="PIRSF000386">
    <property type="entry name" value="tRNA_mtase"/>
    <property type="match status" value="1"/>
</dbReference>
<dbReference type="SUPFAM" id="SSF75217">
    <property type="entry name" value="alpha/beta knot"/>
    <property type="match status" value="1"/>
</dbReference>